<accession>Q9K0V3</accession>
<organism>
    <name type="scientific">Neisseria meningitidis serogroup B (strain ATCC BAA-335 / MC58)</name>
    <dbReference type="NCBI Taxonomy" id="122586"/>
    <lineage>
        <taxon>Bacteria</taxon>
        <taxon>Pseudomonadati</taxon>
        <taxon>Pseudomonadota</taxon>
        <taxon>Betaproteobacteria</taxon>
        <taxon>Neisseriales</taxon>
        <taxon>Neisseriaceae</taxon>
        <taxon>Neisseria</taxon>
    </lineage>
</organism>
<sequence length="416" mass="45190">MIKLTRRQIIRRTAGTLFALSPIASAVAKTVRAPQFTAARIWPSHTYTRLTLESTAALKYQHFTLDNPGRLVVDIQNANINTVLHGLSQKVMADDPFIRSIRAGQNTPTTVRLVIDLKQPTHAQVFALPPVGGFKNRLVVDLYPHGMDADDPMMALLNGSLNKTLRGSPEADLAQNTTPQPGRGRNGRRPVIMLDPGHGGEDPGAISPGGLQEKHVVLSIARETKNQLEALGYNVFMTRNEDVFIPLGVRVAKGRARRADVFVSIHADAFTSPSARGTGVYMLNTKGATSSAAKFLEQTQNNADAVGGVPTSGNRNVDTALLDMTQTATLRDSRKLGKLVLEELGRLNHLHKGRVDEANFAVLRAPDMPSILVETAFLSNPAEEKLLGSESFRRQCAQSIASGVQRYINTSVLKRG</sequence>
<gene>
    <name type="primary">amiC</name>
    <name type="ordered locus">NMB0456</name>
</gene>
<proteinExistence type="evidence at protein level"/>
<dbReference type="EC" id="3.5.1.28"/>
<dbReference type="EMBL" id="AE002098">
    <property type="protein sequence ID" value="AAF40893.1"/>
    <property type="molecule type" value="Genomic_DNA"/>
</dbReference>
<dbReference type="PIR" id="B81198">
    <property type="entry name" value="B81198"/>
</dbReference>
<dbReference type="RefSeq" id="NP_273503.1">
    <property type="nucleotide sequence ID" value="NC_003112.2"/>
</dbReference>
<dbReference type="RefSeq" id="WP_002224939.1">
    <property type="nucleotide sequence ID" value="NC_003112.2"/>
</dbReference>
<dbReference type="SMR" id="Q9K0V3"/>
<dbReference type="FunCoup" id="Q9K0V3">
    <property type="interactions" value="136"/>
</dbReference>
<dbReference type="STRING" id="122586.NMB0456"/>
<dbReference type="PaxDb" id="122586-NMB0456"/>
<dbReference type="DNASU" id="902572"/>
<dbReference type="KEGG" id="nme:NMB0456"/>
<dbReference type="PATRIC" id="fig|122586.8.peg.579"/>
<dbReference type="HOGENOM" id="CLU_014322_2_2_4"/>
<dbReference type="InParanoid" id="Q9K0V3"/>
<dbReference type="OrthoDB" id="9806267at2"/>
<dbReference type="Proteomes" id="UP000000425">
    <property type="component" value="Chromosome"/>
</dbReference>
<dbReference type="GO" id="GO:0030288">
    <property type="term" value="C:outer membrane-bounded periplasmic space"/>
    <property type="evidence" value="ECO:0000318"/>
    <property type="project" value="GO_Central"/>
</dbReference>
<dbReference type="GO" id="GO:0008745">
    <property type="term" value="F:N-acetylmuramoyl-L-alanine amidase activity"/>
    <property type="evidence" value="ECO:0000318"/>
    <property type="project" value="GO_Central"/>
</dbReference>
<dbReference type="GO" id="GO:0071555">
    <property type="term" value="P:cell wall organization"/>
    <property type="evidence" value="ECO:0007669"/>
    <property type="project" value="UniProtKB-KW"/>
</dbReference>
<dbReference type="GO" id="GO:0043093">
    <property type="term" value="P:FtsZ-dependent cytokinesis"/>
    <property type="evidence" value="ECO:0000318"/>
    <property type="project" value="GO_Central"/>
</dbReference>
<dbReference type="GO" id="GO:0009253">
    <property type="term" value="P:peptidoglycan catabolic process"/>
    <property type="evidence" value="ECO:0007669"/>
    <property type="project" value="InterPro"/>
</dbReference>
<dbReference type="CDD" id="cd02696">
    <property type="entry name" value="MurNAc-LAA"/>
    <property type="match status" value="1"/>
</dbReference>
<dbReference type="FunFam" id="3.40.630.40:FF:000001">
    <property type="entry name" value="N-acetylmuramoyl-L-alanine amidase"/>
    <property type="match status" value="1"/>
</dbReference>
<dbReference type="Gene3D" id="2.60.40.3500">
    <property type="match status" value="1"/>
</dbReference>
<dbReference type="Gene3D" id="3.40.630.40">
    <property type="entry name" value="Zn-dependent exopeptidases"/>
    <property type="match status" value="1"/>
</dbReference>
<dbReference type="InterPro" id="IPR021731">
    <property type="entry name" value="AMIN_dom"/>
</dbReference>
<dbReference type="InterPro" id="IPR002508">
    <property type="entry name" value="MurNAc-LAA_cat"/>
</dbReference>
<dbReference type="InterPro" id="IPR050695">
    <property type="entry name" value="N-acetylmuramoyl_amidase_3"/>
</dbReference>
<dbReference type="PANTHER" id="PTHR30404">
    <property type="entry name" value="N-ACETYLMURAMOYL-L-ALANINE AMIDASE"/>
    <property type="match status" value="1"/>
</dbReference>
<dbReference type="PANTHER" id="PTHR30404:SF0">
    <property type="entry name" value="N-ACETYLMURAMOYL-L-ALANINE AMIDASE AMIC"/>
    <property type="match status" value="1"/>
</dbReference>
<dbReference type="Pfam" id="PF01520">
    <property type="entry name" value="Amidase_3"/>
    <property type="match status" value="1"/>
</dbReference>
<dbReference type="Pfam" id="PF11741">
    <property type="entry name" value="AMIN"/>
    <property type="match status" value="1"/>
</dbReference>
<dbReference type="SMART" id="SM00646">
    <property type="entry name" value="Ami_3"/>
    <property type="match status" value="1"/>
</dbReference>
<dbReference type="SUPFAM" id="SSF53187">
    <property type="entry name" value="Zn-dependent exopeptidases"/>
    <property type="match status" value="1"/>
</dbReference>
<feature type="signal peptide" evidence="2">
    <location>
        <begin position="1"/>
        <end position="26"/>
    </location>
</feature>
<feature type="chain" id="PRO_0000320265" description="N-acetylmuramoyl-L-alanine amidase AmiC">
    <location>
        <begin position="27"/>
        <end position="416"/>
    </location>
</feature>
<feature type="domain" description="MurNAc-LAA" evidence="2">
    <location>
        <begin position="192"/>
        <end position="405"/>
    </location>
</feature>
<feature type="region of interest" description="Disordered" evidence="3">
    <location>
        <begin position="166"/>
        <end position="191"/>
    </location>
</feature>
<reference key="1">
    <citation type="journal article" date="2000" name="Science">
        <title>Complete genome sequence of Neisseria meningitidis serogroup B strain MC58.</title>
        <authorList>
            <person name="Tettelin H."/>
            <person name="Saunders N.J."/>
            <person name="Heidelberg J.F."/>
            <person name="Jeffries A.C."/>
            <person name="Nelson K.E."/>
            <person name="Eisen J.A."/>
            <person name="Ketchum K.A."/>
            <person name="Hood D.W."/>
            <person name="Peden J.F."/>
            <person name="Dodson R.J."/>
            <person name="Nelson W.C."/>
            <person name="Gwinn M.L."/>
            <person name="DeBoy R.T."/>
            <person name="Peterson J.D."/>
            <person name="Hickey E.K."/>
            <person name="Haft D.H."/>
            <person name="Salzberg S.L."/>
            <person name="White O."/>
            <person name="Fleischmann R.D."/>
            <person name="Dougherty B.A."/>
            <person name="Mason T.M."/>
            <person name="Ciecko A."/>
            <person name="Parksey D.S."/>
            <person name="Blair E."/>
            <person name="Cittone H."/>
            <person name="Clark E.B."/>
            <person name="Cotton M.D."/>
            <person name="Utterback T.R."/>
            <person name="Khouri H.M."/>
            <person name="Qin H."/>
            <person name="Vamathevan J.J."/>
            <person name="Gill J."/>
            <person name="Scarlato V."/>
            <person name="Masignani V."/>
            <person name="Pizza M."/>
            <person name="Grandi G."/>
            <person name="Sun L."/>
            <person name="Smith H.O."/>
            <person name="Fraser C.M."/>
            <person name="Moxon E.R."/>
            <person name="Rappuoli R."/>
            <person name="Venter J.C."/>
        </authorList>
    </citation>
    <scope>NUCLEOTIDE SEQUENCE [LARGE SCALE GENOMIC DNA]</scope>
    <source>
        <strain>ATCC BAA-335 / MC58</strain>
    </source>
</reference>
<reference key="2">
    <citation type="journal article" date="2005" name="Hum. Vaccin.">
        <title>Characterization of the protein content of a meningococcal outer membrane vesicle vaccine by polyacrylamide gel electrophoresis and mass spectrometry.</title>
        <authorList>
            <person name="Vipond C."/>
            <person name="Wheeler J.X."/>
            <person name="Jones C."/>
            <person name="Feavers I.M."/>
            <person name="Suker J."/>
        </authorList>
    </citation>
    <scope>IDENTIFICATION BY MASS SPECTROMETRY [LARGE SCALE ANALYSIS]</scope>
</reference>
<reference key="3">
    <citation type="journal article" date="2006" name="Proteomics">
        <title>Proteomic analysis of a meningococcal outer membrane vesicle vaccine prepared from the group B strain NZ98/254.</title>
        <authorList>
            <person name="Vipond C."/>
            <person name="Suker J."/>
            <person name="Jones C."/>
            <person name="Tang C."/>
            <person name="Feavers I.M."/>
            <person name="Wheeler J.X."/>
        </authorList>
    </citation>
    <scope>IDENTIFICATION BY MASS SPECTROMETRY [LARGE SCALE ANALYSIS]</scope>
    <source>
        <strain>NZ98/254 / Serogroup B</strain>
    </source>
</reference>
<protein>
    <recommendedName>
        <fullName>N-acetylmuramoyl-L-alanine amidase AmiC</fullName>
        <ecNumber>3.5.1.28</ecNumber>
    </recommendedName>
</protein>
<evidence type="ECO:0000250" key="1"/>
<evidence type="ECO:0000255" key="2"/>
<evidence type="ECO:0000256" key="3">
    <source>
        <dbReference type="SAM" id="MobiDB-lite"/>
    </source>
</evidence>
<evidence type="ECO:0000305" key="4"/>
<keyword id="KW-0961">Cell wall biogenesis/degradation</keyword>
<keyword id="KW-0378">Hydrolase</keyword>
<keyword id="KW-0574">Periplasm</keyword>
<keyword id="KW-1185">Reference proteome</keyword>
<keyword id="KW-0732">Signal</keyword>
<comment type="function">
    <text evidence="1">Cell-wall hydrolase involved in septum cleavage during cell division.</text>
</comment>
<comment type="catalytic activity">
    <reaction>
        <text>Hydrolyzes the link between N-acetylmuramoyl residues and L-amino acid residues in certain cell-wall glycopeptides.</text>
        <dbReference type="EC" id="3.5.1.28"/>
    </reaction>
</comment>
<comment type="subcellular location">
    <subcellularLocation>
        <location evidence="1">Periplasm</location>
    </subcellularLocation>
</comment>
<comment type="miscellaneous">
    <text>Present in outer membrane vesicle formulations which are used as vaccines in human.</text>
</comment>
<comment type="similarity">
    <text evidence="4">Belongs to the N-acetylmuramoyl-L-alanine amidase 3 family.</text>
</comment>
<name>AMIC_NEIMB</name>